<keyword id="KW-0028">Amino-acid biosynthesis</keyword>
<keyword id="KW-0100">Branched-chain amino acid biosynthesis</keyword>
<keyword id="KW-0460">Magnesium</keyword>
<keyword id="KW-0479">Metal-binding</keyword>
<keyword id="KW-0521">NADP</keyword>
<keyword id="KW-0560">Oxidoreductase</keyword>
<keyword id="KW-1185">Reference proteome</keyword>
<keyword id="KW-0677">Repeat</keyword>
<proteinExistence type="inferred from homology"/>
<sequence length="494" mass="54612">MANYFNTLNLREQLDQLGRCRFMAREEFATEADYLKGKKVVIVGCGAQGLNQGLNMRDSGLDVSYALRQAAIDEQRQSFKNAKNNGFNVGSYEQLIPTADLVINLTPDKQHTSVVNAVMPLMKQGAALGYSHGFNIVEEGMQIRKDITVVMVAPKCPGTEVREEYKRGFGVPTLIAVHPENDPQGEGWEIAKAWAAATGGHRAGCLASSFVAEVKSDLMGEQTILCGMLQAGSIVCYEKMVADGIDPGYAGKLLQFGWETITEALKFGGITHMMDRLSNPAKIKAFELSEELKDLMRPLYNKHMDDIISGHFSSTMMADWANDDKDLFGWRAETAETAFENYPTTDVKIAEQEYFDNGILMIAMVRAGVELAFEAMTASGIIDESAYYESLHELPLIANTVARKRLYEMNVVISDTAEYGNYLFANVAVPLLREKFMPKVGTDVIGKGLGVVSNQVDNATLIEVNSIIRNHPVEYIGEELRGYMKDMKRIAVGD</sequence>
<name>ILVC_VIBCH</name>
<comment type="function">
    <text evidence="1">Involved in the biosynthesis of branched-chain amino acids (BCAA). Catalyzes an alkyl-migration followed by a ketol-acid reduction of (S)-2-acetolactate (S2AL) to yield (R)-2,3-dihydroxy-isovalerate. In the isomerase reaction, S2AL is rearranged via a Mg-dependent methyl migration to produce 3-hydroxy-3-methyl-2-ketobutyrate (HMKB). In the reductase reaction, this 2-ketoacid undergoes a metal-dependent reduction by NADPH to yield (R)-2,3-dihydroxy-isovalerate.</text>
</comment>
<comment type="catalytic activity">
    <reaction evidence="1">
        <text>(2R)-2,3-dihydroxy-3-methylbutanoate + NADP(+) = (2S)-2-acetolactate + NADPH + H(+)</text>
        <dbReference type="Rhea" id="RHEA:22068"/>
        <dbReference type="ChEBI" id="CHEBI:15378"/>
        <dbReference type="ChEBI" id="CHEBI:49072"/>
        <dbReference type="ChEBI" id="CHEBI:57783"/>
        <dbReference type="ChEBI" id="CHEBI:58349"/>
        <dbReference type="ChEBI" id="CHEBI:58476"/>
        <dbReference type="EC" id="1.1.1.86"/>
    </reaction>
</comment>
<comment type="catalytic activity">
    <reaction evidence="1">
        <text>(2R,3R)-2,3-dihydroxy-3-methylpentanoate + NADP(+) = (S)-2-ethyl-2-hydroxy-3-oxobutanoate + NADPH + H(+)</text>
        <dbReference type="Rhea" id="RHEA:13493"/>
        <dbReference type="ChEBI" id="CHEBI:15378"/>
        <dbReference type="ChEBI" id="CHEBI:49256"/>
        <dbReference type="ChEBI" id="CHEBI:49258"/>
        <dbReference type="ChEBI" id="CHEBI:57783"/>
        <dbReference type="ChEBI" id="CHEBI:58349"/>
        <dbReference type="EC" id="1.1.1.86"/>
    </reaction>
</comment>
<comment type="cofactor">
    <cofactor evidence="1">
        <name>Mg(2+)</name>
        <dbReference type="ChEBI" id="CHEBI:18420"/>
    </cofactor>
    <text evidence="1">Binds 2 magnesium ions per subunit.</text>
</comment>
<comment type="pathway">
    <text evidence="1">Amino-acid biosynthesis; L-isoleucine biosynthesis; L-isoleucine from 2-oxobutanoate: step 2/4.</text>
</comment>
<comment type="pathway">
    <text evidence="1">Amino-acid biosynthesis; L-valine biosynthesis; L-valine from pyruvate: step 2/4.</text>
</comment>
<comment type="similarity">
    <text evidence="1">Belongs to the ketol-acid reductoisomerase family.</text>
</comment>
<organism>
    <name type="scientific">Vibrio cholerae serotype O1 (strain ATCC 39315 / El Tor Inaba N16961)</name>
    <dbReference type="NCBI Taxonomy" id="243277"/>
    <lineage>
        <taxon>Bacteria</taxon>
        <taxon>Pseudomonadati</taxon>
        <taxon>Pseudomonadota</taxon>
        <taxon>Gammaproteobacteria</taxon>
        <taxon>Vibrionales</taxon>
        <taxon>Vibrionaceae</taxon>
        <taxon>Vibrio</taxon>
    </lineage>
</organism>
<gene>
    <name evidence="1" type="primary">ilvC</name>
    <name type="ordered locus">VC_0162</name>
</gene>
<protein>
    <recommendedName>
        <fullName evidence="1">Ketol-acid reductoisomerase (NADP(+))</fullName>
        <shortName evidence="1">KARI</shortName>
        <ecNumber evidence="1">1.1.1.86</ecNumber>
    </recommendedName>
    <alternativeName>
        <fullName evidence="1">Acetohydroxy-acid isomeroreductase</fullName>
        <shortName evidence="1">AHIR</shortName>
    </alternativeName>
    <alternativeName>
        <fullName evidence="1">Alpha-keto-beta-hydroxylacyl reductoisomerase</fullName>
    </alternativeName>
    <alternativeName>
        <fullName evidence="1">Ketol-acid reductoisomerase type 2</fullName>
    </alternativeName>
    <alternativeName>
        <fullName evidence="1">Ketol-acid reductoisomerase type II</fullName>
    </alternativeName>
</protein>
<evidence type="ECO:0000255" key="1">
    <source>
        <dbReference type="HAMAP-Rule" id="MF_00435"/>
    </source>
</evidence>
<evidence type="ECO:0000255" key="2">
    <source>
        <dbReference type="PROSITE-ProRule" id="PRU01197"/>
    </source>
</evidence>
<evidence type="ECO:0000255" key="3">
    <source>
        <dbReference type="PROSITE-ProRule" id="PRU01198"/>
    </source>
</evidence>
<dbReference type="EC" id="1.1.1.86" evidence="1"/>
<dbReference type="EMBL" id="AE003852">
    <property type="protein sequence ID" value="AAF93338.1"/>
    <property type="molecule type" value="Genomic_DNA"/>
</dbReference>
<dbReference type="PIR" id="G82356">
    <property type="entry name" value="G82356"/>
</dbReference>
<dbReference type="RefSeq" id="NP_229819.1">
    <property type="nucleotide sequence ID" value="NC_002505.1"/>
</dbReference>
<dbReference type="RefSeq" id="WP_000024919.1">
    <property type="nucleotide sequence ID" value="NZ_LT906614.1"/>
</dbReference>
<dbReference type="SMR" id="Q9KVI4"/>
<dbReference type="STRING" id="243277.VC_0162"/>
<dbReference type="DNASU" id="2614429"/>
<dbReference type="EnsemblBacteria" id="AAF93338">
    <property type="protein sequence ID" value="AAF93338"/>
    <property type="gene ID" value="VC_0162"/>
</dbReference>
<dbReference type="KEGG" id="vch:VC_0162"/>
<dbReference type="PATRIC" id="fig|243277.26.peg.149"/>
<dbReference type="eggNOG" id="COG0059">
    <property type="taxonomic scope" value="Bacteria"/>
</dbReference>
<dbReference type="HOGENOM" id="CLU_551905_0_0_6"/>
<dbReference type="UniPathway" id="UPA00047">
    <property type="reaction ID" value="UER00056"/>
</dbReference>
<dbReference type="UniPathway" id="UPA00049">
    <property type="reaction ID" value="UER00060"/>
</dbReference>
<dbReference type="Proteomes" id="UP000000584">
    <property type="component" value="Chromosome 1"/>
</dbReference>
<dbReference type="GO" id="GO:0005829">
    <property type="term" value="C:cytosol"/>
    <property type="evidence" value="ECO:0000318"/>
    <property type="project" value="GO_Central"/>
</dbReference>
<dbReference type="GO" id="GO:0004455">
    <property type="term" value="F:ketol-acid reductoisomerase activity"/>
    <property type="evidence" value="ECO:0000318"/>
    <property type="project" value="GO_Central"/>
</dbReference>
<dbReference type="GO" id="GO:0000287">
    <property type="term" value="F:magnesium ion binding"/>
    <property type="evidence" value="ECO:0007669"/>
    <property type="project" value="UniProtKB-UniRule"/>
</dbReference>
<dbReference type="GO" id="GO:0009097">
    <property type="term" value="P:isoleucine biosynthetic process"/>
    <property type="evidence" value="ECO:0000318"/>
    <property type="project" value="GO_Central"/>
</dbReference>
<dbReference type="GO" id="GO:0009099">
    <property type="term" value="P:L-valine biosynthetic process"/>
    <property type="evidence" value="ECO:0000318"/>
    <property type="project" value="GO_Central"/>
</dbReference>
<dbReference type="FunFam" id="1.10.1040.10:FF:000007">
    <property type="entry name" value="Ketol-acid reductoisomerase (NADP(+))"/>
    <property type="match status" value="1"/>
</dbReference>
<dbReference type="FunFam" id="3.40.50.720:FF:000043">
    <property type="entry name" value="Ketol-acid reductoisomerase (NADP(+))"/>
    <property type="match status" value="1"/>
</dbReference>
<dbReference type="Gene3D" id="1.10.1040.10">
    <property type="entry name" value="N-(1-d-carboxylethyl)-l-norvaline Dehydrogenase, domain 2"/>
    <property type="match status" value="1"/>
</dbReference>
<dbReference type="Gene3D" id="3.40.50.720">
    <property type="entry name" value="NAD(P)-binding Rossmann-like Domain"/>
    <property type="match status" value="1"/>
</dbReference>
<dbReference type="HAMAP" id="MF_00435">
    <property type="entry name" value="IlvC"/>
    <property type="match status" value="1"/>
</dbReference>
<dbReference type="InterPro" id="IPR008927">
    <property type="entry name" value="6-PGluconate_DH-like_C_sf"/>
</dbReference>
<dbReference type="InterPro" id="IPR013328">
    <property type="entry name" value="6PGD_dom2"/>
</dbReference>
<dbReference type="InterPro" id="IPR013023">
    <property type="entry name" value="KARI"/>
</dbReference>
<dbReference type="InterPro" id="IPR000506">
    <property type="entry name" value="KARI_C"/>
</dbReference>
<dbReference type="InterPro" id="IPR013116">
    <property type="entry name" value="KARI_N"/>
</dbReference>
<dbReference type="InterPro" id="IPR036291">
    <property type="entry name" value="NAD(P)-bd_dom_sf"/>
</dbReference>
<dbReference type="NCBIfam" id="TIGR00465">
    <property type="entry name" value="ilvC"/>
    <property type="match status" value="1"/>
</dbReference>
<dbReference type="NCBIfam" id="NF003557">
    <property type="entry name" value="PRK05225.1"/>
    <property type="match status" value="1"/>
</dbReference>
<dbReference type="PANTHER" id="PTHR21371">
    <property type="entry name" value="KETOL-ACID REDUCTOISOMERASE, MITOCHONDRIAL"/>
    <property type="match status" value="1"/>
</dbReference>
<dbReference type="PANTHER" id="PTHR21371:SF1">
    <property type="entry name" value="KETOL-ACID REDUCTOISOMERASE, MITOCHONDRIAL"/>
    <property type="match status" value="1"/>
</dbReference>
<dbReference type="Pfam" id="PF01450">
    <property type="entry name" value="KARI_C"/>
    <property type="match status" value="2"/>
</dbReference>
<dbReference type="Pfam" id="PF07991">
    <property type="entry name" value="KARI_N"/>
    <property type="match status" value="1"/>
</dbReference>
<dbReference type="SUPFAM" id="SSF48179">
    <property type="entry name" value="6-phosphogluconate dehydrogenase C-terminal domain-like"/>
    <property type="match status" value="2"/>
</dbReference>
<dbReference type="SUPFAM" id="SSF51735">
    <property type="entry name" value="NAD(P)-binding Rossmann-fold domains"/>
    <property type="match status" value="1"/>
</dbReference>
<dbReference type="PROSITE" id="PS51851">
    <property type="entry name" value="KARI_C"/>
    <property type="match status" value="2"/>
</dbReference>
<dbReference type="PROSITE" id="PS51850">
    <property type="entry name" value="KARI_N"/>
    <property type="match status" value="1"/>
</dbReference>
<feature type="chain" id="PRO_0000151378" description="Ketol-acid reductoisomerase (NADP(+))">
    <location>
        <begin position="1"/>
        <end position="494"/>
    </location>
</feature>
<feature type="domain" description="KARI N-terminal Rossmann" evidence="2">
    <location>
        <begin position="14"/>
        <end position="208"/>
    </location>
</feature>
<feature type="domain" description="KARI C-terminal knotted 1" evidence="3">
    <location>
        <begin position="209"/>
        <end position="344"/>
    </location>
</feature>
<feature type="domain" description="KARI C-terminal knotted 2" evidence="3">
    <location>
        <begin position="345"/>
        <end position="487"/>
    </location>
</feature>
<feature type="active site" evidence="1">
    <location>
        <position position="132"/>
    </location>
</feature>
<feature type="binding site" evidence="1">
    <location>
        <begin position="45"/>
        <end position="48"/>
    </location>
    <ligand>
        <name>NADP(+)</name>
        <dbReference type="ChEBI" id="CHEBI:58349"/>
    </ligand>
</feature>
<feature type="binding site" evidence="1">
    <location>
        <position position="68"/>
    </location>
    <ligand>
        <name>NADP(+)</name>
        <dbReference type="ChEBI" id="CHEBI:58349"/>
    </ligand>
</feature>
<feature type="binding site" evidence="1">
    <location>
        <position position="76"/>
    </location>
    <ligand>
        <name>NADP(+)</name>
        <dbReference type="ChEBI" id="CHEBI:58349"/>
    </ligand>
</feature>
<feature type="binding site" evidence="1">
    <location>
        <position position="78"/>
    </location>
    <ligand>
        <name>NADP(+)</name>
        <dbReference type="ChEBI" id="CHEBI:58349"/>
    </ligand>
</feature>
<feature type="binding site" evidence="1">
    <location>
        <begin position="108"/>
        <end position="110"/>
    </location>
    <ligand>
        <name>NADP(+)</name>
        <dbReference type="ChEBI" id="CHEBI:58349"/>
    </ligand>
</feature>
<feature type="binding site" evidence="1">
    <location>
        <position position="158"/>
    </location>
    <ligand>
        <name>NADP(+)</name>
        <dbReference type="ChEBI" id="CHEBI:58349"/>
    </ligand>
</feature>
<feature type="binding site" evidence="1">
    <location>
        <position position="217"/>
    </location>
    <ligand>
        <name>Mg(2+)</name>
        <dbReference type="ChEBI" id="CHEBI:18420"/>
        <label>1</label>
    </ligand>
</feature>
<feature type="binding site" evidence="1">
    <location>
        <position position="217"/>
    </location>
    <ligand>
        <name>Mg(2+)</name>
        <dbReference type="ChEBI" id="CHEBI:18420"/>
        <label>2</label>
    </ligand>
</feature>
<feature type="binding site" evidence="1">
    <location>
        <position position="221"/>
    </location>
    <ligand>
        <name>Mg(2+)</name>
        <dbReference type="ChEBI" id="CHEBI:18420"/>
        <label>1</label>
    </ligand>
</feature>
<feature type="binding site" evidence="1">
    <location>
        <position position="389"/>
    </location>
    <ligand>
        <name>Mg(2+)</name>
        <dbReference type="ChEBI" id="CHEBI:18420"/>
        <label>2</label>
    </ligand>
</feature>
<feature type="binding site" evidence="1">
    <location>
        <position position="393"/>
    </location>
    <ligand>
        <name>Mg(2+)</name>
        <dbReference type="ChEBI" id="CHEBI:18420"/>
        <label>2</label>
    </ligand>
</feature>
<feature type="binding site" evidence="1">
    <location>
        <position position="414"/>
    </location>
    <ligand>
        <name>substrate</name>
    </ligand>
</feature>
<accession>Q9KVI4</accession>
<reference key="1">
    <citation type="journal article" date="2000" name="Nature">
        <title>DNA sequence of both chromosomes of the cholera pathogen Vibrio cholerae.</title>
        <authorList>
            <person name="Heidelberg J.F."/>
            <person name="Eisen J.A."/>
            <person name="Nelson W.C."/>
            <person name="Clayton R.A."/>
            <person name="Gwinn M.L."/>
            <person name="Dodson R.J."/>
            <person name="Haft D.H."/>
            <person name="Hickey E.K."/>
            <person name="Peterson J.D."/>
            <person name="Umayam L.A."/>
            <person name="Gill S.R."/>
            <person name="Nelson K.E."/>
            <person name="Read T.D."/>
            <person name="Tettelin H."/>
            <person name="Richardson D.L."/>
            <person name="Ermolaeva M.D."/>
            <person name="Vamathevan J.J."/>
            <person name="Bass S."/>
            <person name="Qin H."/>
            <person name="Dragoi I."/>
            <person name="Sellers P."/>
            <person name="McDonald L.A."/>
            <person name="Utterback T.R."/>
            <person name="Fleischmann R.D."/>
            <person name="Nierman W.C."/>
            <person name="White O."/>
            <person name="Salzberg S.L."/>
            <person name="Smith H.O."/>
            <person name="Colwell R.R."/>
            <person name="Mekalanos J.J."/>
            <person name="Venter J.C."/>
            <person name="Fraser C.M."/>
        </authorList>
    </citation>
    <scope>NUCLEOTIDE SEQUENCE [LARGE SCALE GENOMIC DNA]</scope>
    <source>
        <strain>ATCC 39315 / El Tor Inaba N16961</strain>
    </source>
</reference>